<reference key="1">
    <citation type="submission" date="2005-09" db="EMBL/GenBank/DDBJ databases">
        <authorList>
            <person name="Mural R.J."/>
            <person name="Adams M.D."/>
            <person name="Myers E.W."/>
            <person name="Smith H.O."/>
            <person name="Venter J.C."/>
        </authorList>
    </citation>
    <scope>NUCLEOTIDE SEQUENCE [LARGE SCALE GENOMIC DNA]</scope>
    <source>
        <strain>Brown Norway</strain>
    </source>
</reference>
<reference key="2">
    <citation type="journal article" date="2004" name="J. Cell. Biochem.">
        <title>RGA protein associates with a TRPV ion channel during biosynthesis and trafficking.</title>
        <authorList>
            <person name="Barnhill J.C."/>
            <person name="Stokes A.J."/>
            <person name="Koblan-Huberson M."/>
            <person name="Shimoda L.M."/>
            <person name="Muraguchi A."/>
            <person name="Adra C.N."/>
            <person name="Turner H."/>
        </authorList>
    </citation>
    <scope>INTERACTION WITH TRPV2</scope>
    <scope>SUBCELLULAR LOCATION</scope>
</reference>
<comment type="function">
    <text evidence="1">Mediates sugar transport across membranes. May stimulate V(D)J recombination by the activation of RAG1 (By similarity).</text>
</comment>
<comment type="subunit">
    <text evidence="3">Interacts with TRPV2; the interaction probably occurs intracellularly and depends on TRPV2 N-glycosylation.</text>
</comment>
<comment type="subcellular location">
    <subcellularLocation>
        <location evidence="3">Golgi apparatus membrane</location>
        <topology evidence="3">Multi-pass membrane protein</topology>
    </subcellularLocation>
    <subcellularLocation>
        <location evidence="1">Cell membrane</location>
        <topology evidence="1">Multi-pass membrane protein</topology>
    </subcellularLocation>
    <text>May also localize to the endoplasmic reticulum.</text>
</comment>
<comment type="similarity">
    <text evidence="4">Belongs to the SWEET sugar transporter family.</text>
</comment>
<sequence length="221" mass="24694">MEAGGVADSFLSSACVLFTLGMFSTGLSDLRHMQRTRSVDNIQFLPFLTTDVNNLGWLSYGVLKGDGTLIIVNTVGAVLQTLYILAYLHYSPQKHAVLLQTATLLAVLLLGYGYFWLLVPDLETRLQQLGLFCSVFTISMYLSPLADLAKIIQTKSTQRLSFSLTIATLLSSTSWSIYGFRLKDPYITVPNLPGILTGFIRLVLFYKYPPEQDTKYRLLQT</sequence>
<evidence type="ECO:0000250" key="1"/>
<evidence type="ECO:0000255" key="2"/>
<evidence type="ECO:0000269" key="3">
    <source>
    </source>
</evidence>
<evidence type="ECO:0000305" key="4"/>
<proteinExistence type="evidence at protein level"/>
<name>SWET1_RAT</name>
<gene>
    <name type="primary">Slc50a1</name>
    <name type="synonym">Rag1ap1</name>
    <name type="synonym">Rga</name>
</gene>
<accession>D3ZH22</accession>
<dbReference type="EMBL" id="CH473976">
    <property type="protein sequence ID" value="EDM00646.1"/>
    <property type="molecule type" value="Genomic_DNA"/>
</dbReference>
<dbReference type="RefSeq" id="NP_001099915.1">
    <property type="nucleotide sequence ID" value="NM_001106445.1"/>
</dbReference>
<dbReference type="SMR" id="D3ZH22"/>
<dbReference type="FunCoup" id="D3ZH22">
    <property type="interactions" value="885"/>
</dbReference>
<dbReference type="STRING" id="10116.ENSRNOP00000027878"/>
<dbReference type="PhosphoSitePlus" id="D3ZH22"/>
<dbReference type="PaxDb" id="10116-ENSRNOP00000027878"/>
<dbReference type="PeptideAtlas" id="D3ZH22"/>
<dbReference type="GeneID" id="295245"/>
<dbReference type="KEGG" id="rno:295245"/>
<dbReference type="UCSC" id="RGD:1308478">
    <property type="organism name" value="rat"/>
</dbReference>
<dbReference type="AGR" id="RGD:1308478"/>
<dbReference type="CTD" id="55974"/>
<dbReference type="RGD" id="1308478">
    <property type="gene designation" value="Slc50a1"/>
</dbReference>
<dbReference type="VEuPathDB" id="HostDB:ENSRNOG00000020554"/>
<dbReference type="eggNOG" id="KOG1623">
    <property type="taxonomic scope" value="Eukaryota"/>
</dbReference>
<dbReference type="HOGENOM" id="CLU_048643_3_0_1"/>
<dbReference type="InParanoid" id="D3ZH22"/>
<dbReference type="OrthoDB" id="409725at2759"/>
<dbReference type="PhylomeDB" id="D3ZH22"/>
<dbReference type="TreeFam" id="TF313635"/>
<dbReference type="Reactome" id="R-RNO-189200">
    <property type="pathway name" value="Cellular hexose transport"/>
</dbReference>
<dbReference type="PRO" id="PR:D3ZH22"/>
<dbReference type="Proteomes" id="UP000002494">
    <property type="component" value="Chromosome 2"/>
</dbReference>
<dbReference type="Proteomes" id="UP000234681">
    <property type="component" value="Chromosome 2"/>
</dbReference>
<dbReference type="Bgee" id="ENSRNOG00000020554">
    <property type="expression patterns" value="Expressed in colon and 20 other cell types or tissues"/>
</dbReference>
<dbReference type="GO" id="GO:0012505">
    <property type="term" value="C:endomembrane system"/>
    <property type="evidence" value="ECO:0000314"/>
    <property type="project" value="UniProtKB"/>
</dbReference>
<dbReference type="GO" id="GO:0005794">
    <property type="term" value="C:Golgi apparatus"/>
    <property type="evidence" value="ECO:0000266"/>
    <property type="project" value="RGD"/>
</dbReference>
<dbReference type="GO" id="GO:0000139">
    <property type="term" value="C:Golgi membrane"/>
    <property type="evidence" value="ECO:0007669"/>
    <property type="project" value="UniProtKB-SubCell"/>
</dbReference>
<dbReference type="GO" id="GO:0016020">
    <property type="term" value="C:membrane"/>
    <property type="evidence" value="ECO:0000318"/>
    <property type="project" value="GO_Central"/>
</dbReference>
<dbReference type="GO" id="GO:0005886">
    <property type="term" value="C:plasma membrane"/>
    <property type="evidence" value="ECO:0000266"/>
    <property type="project" value="RGD"/>
</dbReference>
<dbReference type="GO" id="GO:0042947">
    <property type="term" value="F:glucoside transmembrane transporter activity"/>
    <property type="evidence" value="ECO:0000266"/>
    <property type="project" value="RGD"/>
</dbReference>
<dbReference type="GO" id="GO:0051119">
    <property type="term" value="F:sugar transmembrane transporter activity"/>
    <property type="evidence" value="ECO:0000318"/>
    <property type="project" value="GO_Central"/>
</dbReference>
<dbReference type="GO" id="GO:0008643">
    <property type="term" value="P:carbohydrate transport"/>
    <property type="evidence" value="ECO:0000318"/>
    <property type="project" value="GO_Central"/>
</dbReference>
<dbReference type="FunFam" id="1.20.1280.290:FF:000021">
    <property type="entry name" value="Solute carrier family 50 member 1"/>
    <property type="match status" value="1"/>
</dbReference>
<dbReference type="FunFam" id="1.20.1280.290:FF:000010">
    <property type="entry name" value="Sugar transporter SWEET"/>
    <property type="match status" value="1"/>
</dbReference>
<dbReference type="Gene3D" id="1.20.1280.290">
    <property type="match status" value="2"/>
</dbReference>
<dbReference type="InterPro" id="IPR047664">
    <property type="entry name" value="SWEET"/>
</dbReference>
<dbReference type="InterPro" id="IPR004316">
    <property type="entry name" value="SWEET_rpt"/>
</dbReference>
<dbReference type="PANTHER" id="PTHR10791">
    <property type="entry name" value="RAG1-ACTIVATING PROTEIN 1"/>
    <property type="match status" value="1"/>
</dbReference>
<dbReference type="PANTHER" id="PTHR10791:SF30">
    <property type="entry name" value="SUGAR TRANSPORTER SWEET1"/>
    <property type="match status" value="1"/>
</dbReference>
<dbReference type="Pfam" id="PF03083">
    <property type="entry name" value="MtN3_slv"/>
    <property type="match status" value="2"/>
</dbReference>
<feature type="chain" id="PRO_0000405430" description="Sugar transporter SWEET1">
    <location>
        <begin position="1"/>
        <end position="221"/>
    </location>
</feature>
<feature type="transmembrane region" description="Helical; Name=1" evidence="2">
    <location>
        <begin position="3"/>
        <end position="23"/>
    </location>
</feature>
<feature type="transmembrane region" description="Helical; Name=2" evidence="2">
    <location>
        <begin position="44"/>
        <end position="63"/>
    </location>
</feature>
<feature type="transmembrane region" description="Helical; Name=3" evidence="2">
    <location>
        <begin position="68"/>
        <end position="88"/>
    </location>
</feature>
<feature type="transmembrane region" description="Helical; Name=4" evidence="2">
    <location>
        <begin position="102"/>
        <end position="122"/>
    </location>
</feature>
<feature type="transmembrane region" description="Helical; Name=5" evidence="2">
    <location>
        <begin position="129"/>
        <end position="149"/>
    </location>
</feature>
<feature type="transmembrane region" description="Helical; Name=6" evidence="2">
    <location>
        <begin position="160"/>
        <end position="180"/>
    </location>
</feature>
<feature type="transmembrane region" description="Helical; Name=7" evidence="2">
    <location>
        <begin position="186"/>
        <end position="206"/>
    </location>
</feature>
<feature type="domain" description="MtN3/slv 1">
    <location>
        <begin position="10"/>
        <end position="94"/>
    </location>
</feature>
<feature type="domain" description="MtN3/slv 2">
    <location>
        <begin position="127"/>
        <end position="212"/>
    </location>
</feature>
<feature type="region of interest" description="Mediates interaction with TRPV2" evidence="3">
    <location>
        <begin position="149"/>
        <end position="221"/>
    </location>
</feature>
<keyword id="KW-1003">Cell membrane</keyword>
<keyword id="KW-0333">Golgi apparatus</keyword>
<keyword id="KW-0472">Membrane</keyword>
<keyword id="KW-1185">Reference proteome</keyword>
<keyword id="KW-0677">Repeat</keyword>
<keyword id="KW-0762">Sugar transport</keyword>
<keyword id="KW-0812">Transmembrane</keyword>
<keyword id="KW-1133">Transmembrane helix</keyword>
<keyword id="KW-0813">Transport</keyword>
<organism>
    <name type="scientific">Rattus norvegicus</name>
    <name type="common">Rat</name>
    <dbReference type="NCBI Taxonomy" id="10116"/>
    <lineage>
        <taxon>Eukaryota</taxon>
        <taxon>Metazoa</taxon>
        <taxon>Chordata</taxon>
        <taxon>Craniata</taxon>
        <taxon>Vertebrata</taxon>
        <taxon>Euteleostomi</taxon>
        <taxon>Mammalia</taxon>
        <taxon>Eutheria</taxon>
        <taxon>Euarchontoglires</taxon>
        <taxon>Glires</taxon>
        <taxon>Rodentia</taxon>
        <taxon>Myomorpha</taxon>
        <taxon>Muroidea</taxon>
        <taxon>Muridae</taxon>
        <taxon>Murinae</taxon>
        <taxon>Rattus</taxon>
    </lineage>
</organism>
<protein>
    <recommendedName>
        <fullName>Sugar transporter SWEET1</fullName>
    </recommendedName>
    <alternativeName>
        <fullName>RAG1-activating protein 1</fullName>
    </alternativeName>
    <alternativeName>
        <fullName>Solute carrier family 50 member 1</fullName>
    </alternativeName>
</protein>